<comment type="function">
    <text evidence="2 5 7 8 9">Plays a major role in controlling sexual cell fates (PubMed:11250902, PubMed:24098152, PubMed:8889523). Promotes female development in XX animals where it sequesters one or more of the FEM proteins to the membrane thereby freeing the tra-1 protein (a putative transcription factor) to enter the nucleus and promote female development (By similarity). In XO animals it acts as a receptor for her-1 which prevents it from binding to FEM proteins thereby repressing the activity of tra-1 (By similarity). Negatively regulates male development when bound to fem-3 and is required together with tra-1 for promoting spermatogenesis (PubMed:12477393). Also required for feminizing tra-3 activity (By similarity).</text>
</comment>
<comment type="subunit">
    <text evidence="5 7">Interacts with tra-1 and fem-3.</text>
</comment>
<comment type="subcellular location">
    <subcellularLocation>
        <location>Membrane</location>
        <topology>Multi-pass membrane protein</topology>
    </subcellularLocation>
</comment>
<comment type="alternative products">
    <event type="alternative splicing"/>
    <isoform>
        <id>Q17307-1</id>
        <name>a</name>
        <sequence type="displayed"/>
    </isoform>
    <text>A number of isoforms are produced.</text>
</comment>
<comment type="disruption phenotype">
    <text evidence="8">Null hermaphrodite mutants have masculinized germ lines, producing only sperm. Animals make incomplete male tails, producing shorter stubby tails that lack sensory structures called rays.</text>
</comment>
<sequence length="1489" mass="171114">MKLAFNKLLVASVVFTVLSFGLLLASLFTTTATTPSEWTILLPEFRFPVNKKQTTEQFLVEKIVHEHEEGEDVRSALYLTHHGYFMNAIANMKVTYRQKSYTVNDVCFKPHSAIFENVPAPENIDKLPAYFQRLLLEMQRLSPCLIVTPLNCFYDSYHIHSEISNWNASTDYLNRRLRNSYLEAIEEKDSRPYVKSTYGPELIKEWARHMFAIPSKPLSNFSKSDLYSRVKTWLSSIAARKKICADPMRSCDETLDAENYFNVCTVMQQINDYDERRKQRLKFQLEYGDEEFTTRLDCVEDREKFIEWMQERNLRDMLKLFASSVEIPDHKEIPNQVCDGIYHDLDTSSGLELFRGARSFSNNTSAYDTINVELGFMTPENLLTTMRHSDFVNGFESIWTIERARELLNEFRLALKVEVTKFSESRSSRRVKVTTRIVNQIEEEGSDEEMEYHMIYFILGACALMVALFAAFAFSEAFLTSLSMFLLRGFITGLLFIFLCKSGGLILIDSNFLCYITMHLAFNLVMTARVTFICYRIGGCVQSEKDFVKSNFSSLGSVPVDSLKEDSCKRHVQYVLAKYTKFQVAQDAYSEEPFEKLPKYWFLIAIVLVPVIGVYWFFIDSDVQKICIVLLPAFLIAAFEEMRVKNQLLRERRIKKAIQRLQKEENTRIMSRGEIDNLLSGNAELSGEKSHYESKQGVLHHGSAGGLFELSRSTYDVSLIMAYPNQMIRNLRLCALGAYFRLFKMKYCAVVVSSVAALLILLSIGLLFIPVQRSSVPKELQQDELSIDFAIPNVSSSSWESINEYLEEFNSEIDSITNLQTITNGRRVLINSTSKINNFLKWVDDEPISWYLTAPLTRPYRKTHLPNPFRFQFRYGFDSIQKSTIIDVVERIDTLLTKYTETLSFPKAIGFLYEHYHQKAVVWNSFAYHEIFAAAVLAGFFSIIVVFFSIGPVVLPTLAFAFFVVGNRLEIAAIVSLFSLEYHQCYTNVAVFVGFLAAWTPFCDLARFRGRLLYKDQTRRTPELATQRRIRVPHVAAVDTVQIFAIFLTATILLIVITAIIPQFRAFFIPTVILLITLLLAVFNSLAVSLAAYQMFEHEVRHCYHDQLQSLTTTGKVCDMTRKKLLPREEDLSIPMEEFSIRPTENTKHYAPRPIDNSDPPEQAADEEVVNQDPSMEAARRQYVEFTHRTTGMPIELINQFVDNFPVFNVPANFLPNYFALGGAPLDANNGVLLRQPGIAPPPRPNREEDEEERFGLGGGEDDDSYPSSGDDIGDPAKEQQEVTDDVATRYKEEEVRKKVQPAVPNYDDPNVPGPSNPVPRQVEQVSREAPEDSPNREPRILVYQRPPRLHEIPQISHGRNPLHDPPSMEEYVQKYDDPNQPPSRRADQYPPSFTPAMVGYCEDVYWKYNERNLPDNVPMPPRPRDWDQRRLVELPPPEDFDEVPPPGRSAIPIPPGAIRLRERRREQHLREQEARRNRPESPDDTPGL</sequence>
<proteinExistence type="evidence at protein level"/>
<gene>
    <name evidence="12" type="primary">tra-2</name>
    <name evidence="12" type="ORF">CBG11194</name>
</gene>
<keyword id="KW-0025">Alternative splicing</keyword>
<keyword id="KW-0217">Developmental protein</keyword>
<keyword id="KW-0221">Differentiation</keyword>
<keyword id="KW-0472">Membrane</keyword>
<keyword id="KW-0675">Receptor</keyword>
<keyword id="KW-1185">Reference proteome</keyword>
<keyword id="KW-0726">Sexual differentiation</keyword>
<keyword id="KW-0732">Signal</keyword>
<keyword id="KW-0744">Spermatogenesis</keyword>
<keyword id="KW-0812">Transmembrane</keyword>
<keyword id="KW-1133">Transmembrane helix</keyword>
<protein>
    <recommendedName>
        <fullName evidence="12">Sex-determining transformer protein 2</fullName>
        <shortName evidence="12">Cbr-Tra-2A</shortName>
        <shortName evidence="10">Cbr-tra-2</shortName>
    </recommendedName>
</protein>
<reference key="1">
    <citation type="journal article" date="1994" name="Nucleic Acids Res.">
        <title>Cloning by synteny: identifying C. briggsae homologues of C. elegans genes.</title>
        <authorList>
            <person name="Kuwabara P.E."/>
            <person name="Shah S."/>
        </authorList>
    </citation>
    <scope>NUCLEOTIDE SEQUENCE [MRNA]</scope>
</reference>
<reference key="2">
    <citation type="journal article" date="1996" name="Genetics">
        <title>Interspecies comparison reveals evolution of control regions in the nematode sex-determining gene tra-2.</title>
        <authorList>
            <person name="Kuwabara P.E."/>
        </authorList>
    </citation>
    <scope>NUCLEOTIDE SEQUENCE [GENOMIC DNA]</scope>
    <scope>FUNCTION</scope>
    <scope>ALTERNATIVE SPLICING</scope>
    <source>
        <strain>Gujarat</strain>
    </source>
</reference>
<reference key="3">
    <citation type="journal article" date="2003" name="PLoS Biol.">
        <title>The genome sequence of Caenorhabditis briggsae: a platform for comparative genomics.</title>
        <authorList>
            <person name="Stein L.D."/>
            <person name="Bao Z."/>
            <person name="Blasiar D."/>
            <person name="Blumenthal T."/>
            <person name="Brent M.R."/>
            <person name="Chen N."/>
            <person name="Chinwalla A."/>
            <person name="Clarke L."/>
            <person name="Clee C."/>
            <person name="Coghlan A."/>
            <person name="Coulson A."/>
            <person name="D'Eustachio P."/>
            <person name="Fitch D.H.A."/>
            <person name="Fulton L.A."/>
            <person name="Fulton R.E."/>
            <person name="Griffiths-Jones S."/>
            <person name="Harris T.W."/>
            <person name="Hillier L.W."/>
            <person name="Kamath R."/>
            <person name="Kuwabara P.E."/>
            <person name="Mardis E.R."/>
            <person name="Marra M.A."/>
            <person name="Miner T.L."/>
            <person name="Minx P."/>
            <person name="Mullikin J.C."/>
            <person name="Plumb R.W."/>
            <person name="Rogers J."/>
            <person name="Schein J.E."/>
            <person name="Sohrmann M."/>
            <person name="Spieth J."/>
            <person name="Stajich J.E."/>
            <person name="Wei C."/>
            <person name="Willey D."/>
            <person name="Wilson R.K."/>
            <person name="Durbin R.M."/>
            <person name="Waterston R.H."/>
        </authorList>
    </citation>
    <scope>NUCLEOTIDE SEQUENCE [LARGE SCALE GENOMIC DNA]</scope>
    <source>
        <strain>AF16</strain>
    </source>
</reference>
<reference key="4">
    <citation type="journal article" date="2002" name="Genetics">
        <title>Levels of DNA polymorphism vary with mating system in the nematode genus Caenorhabditis.</title>
        <authorList>
            <person name="Graustein A."/>
            <person name="Gaspar J.M."/>
            <person name="Walters J.R."/>
            <person name="Palopoli M.F."/>
        </authorList>
    </citation>
    <scope>NUCLEOTIDE SEQUENCE [GENOMIC DNA] OF 26-137</scope>
    <scope>VARIANTS ASN-30; SER-40; GLU-57 AND THR-120</scope>
    <source>
        <strain>AF16</strain>
        <strain>HK104</strain>
        <strain>HK105</strain>
        <strain>PB800</strain>
        <strain>PB826</strain>
        <strain>VT847</strain>
    </source>
</reference>
<reference key="5">
    <citation type="journal article" date="2001" name="EMBO J.">
        <title>The TRA-1 transcription factor binds TRA-2 to regulate sexual fates in Caenorhabditis elegans.</title>
        <authorList>
            <person name="Wang S."/>
            <person name="Kimble J."/>
        </authorList>
    </citation>
    <scope>FUNCTION</scope>
    <scope>INTERACTION WITH TRA-1</scope>
</reference>
<reference key="6">
    <citation type="journal article" date="2002" name="Curr. Biol.">
        <title>Rapid coevolution of the nematode sex-determining genes fem-3 and tra-2.</title>
        <authorList>
            <person name="Haag E.S."/>
            <person name="Wang S."/>
            <person name="Kimble J."/>
        </authorList>
    </citation>
    <scope>FUNCTION</scope>
    <scope>INTERACTION WITH FEM-3</scope>
</reference>
<reference key="7">
    <citation type="journal article" date="2013" name="PLoS Genet.">
        <title>Evolutionary change within a bipotential switch shaped the sperm/oocyte decision in hermaphroditic nematodes.</title>
        <authorList>
            <person name="Guo Y."/>
            <person name="Chen X."/>
            <person name="Ellis R.E."/>
        </authorList>
    </citation>
    <scope>FUNCTION</scope>
    <scope>DISRUPTION PHENOTYPE</scope>
</reference>
<evidence type="ECO:0000250" key="1"/>
<evidence type="ECO:0000250" key="2">
    <source>
        <dbReference type="UniProtKB" id="P34709"/>
    </source>
</evidence>
<evidence type="ECO:0000255" key="3"/>
<evidence type="ECO:0000256" key="4">
    <source>
        <dbReference type="SAM" id="MobiDB-lite"/>
    </source>
</evidence>
<evidence type="ECO:0000269" key="5">
    <source>
    </source>
</evidence>
<evidence type="ECO:0000269" key="6">
    <source>
    </source>
</evidence>
<evidence type="ECO:0000269" key="7">
    <source>
    </source>
</evidence>
<evidence type="ECO:0000269" key="8">
    <source>
    </source>
</evidence>
<evidence type="ECO:0000269" key="9">
    <source>
    </source>
</evidence>
<evidence type="ECO:0000303" key="10">
    <source>
    </source>
</evidence>
<evidence type="ECO:0000305" key="11"/>
<evidence type="ECO:0000312" key="12">
    <source>
        <dbReference type="WormBase" id="CBG11194a"/>
    </source>
</evidence>
<organism>
    <name type="scientific">Caenorhabditis briggsae</name>
    <dbReference type="NCBI Taxonomy" id="6238"/>
    <lineage>
        <taxon>Eukaryota</taxon>
        <taxon>Metazoa</taxon>
        <taxon>Ecdysozoa</taxon>
        <taxon>Nematoda</taxon>
        <taxon>Chromadorea</taxon>
        <taxon>Rhabditida</taxon>
        <taxon>Rhabditina</taxon>
        <taxon>Rhabditomorpha</taxon>
        <taxon>Rhabditoidea</taxon>
        <taxon>Rhabditidae</taxon>
        <taxon>Peloderinae</taxon>
        <taxon>Caenorhabditis</taxon>
    </lineage>
</organism>
<dbReference type="EMBL" id="U59879">
    <property type="protein sequence ID" value="AAB49333.1"/>
    <property type="molecule type" value="mRNA"/>
</dbReference>
<dbReference type="EMBL" id="HE601002">
    <property type="protein sequence ID" value="CAP30389.1"/>
    <property type="molecule type" value="Genomic_DNA"/>
</dbReference>
<dbReference type="EMBL" id="AF491464">
    <property type="protein sequence ID" value="AAM09704.1"/>
    <property type="molecule type" value="Genomic_DNA"/>
</dbReference>
<dbReference type="EMBL" id="AF491465">
    <property type="protein sequence ID" value="AAM09705.1"/>
    <property type="molecule type" value="Genomic_DNA"/>
</dbReference>
<dbReference type="EMBL" id="AF491466">
    <property type="protein sequence ID" value="AAM09706.1"/>
    <property type="molecule type" value="Genomic_DNA"/>
</dbReference>
<dbReference type="EMBL" id="AF491467">
    <property type="protein sequence ID" value="AAM09707.1"/>
    <property type="molecule type" value="Genomic_DNA"/>
</dbReference>
<dbReference type="EMBL" id="AF491468">
    <property type="protein sequence ID" value="AAM09708.1"/>
    <property type="molecule type" value="Genomic_DNA"/>
</dbReference>
<dbReference type="EMBL" id="AF491469">
    <property type="protein sequence ID" value="AAM09709.1"/>
    <property type="molecule type" value="Genomic_DNA"/>
</dbReference>
<dbReference type="PIR" id="S72250">
    <property type="entry name" value="S72250"/>
</dbReference>
<dbReference type="FunCoup" id="Q17307">
    <property type="interactions" value="1341"/>
</dbReference>
<dbReference type="IntAct" id="Q17307">
    <property type="interactions" value="1"/>
</dbReference>
<dbReference type="STRING" id="6238.Q17307"/>
<dbReference type="WormBase" id="CBG11194a">
    <property type="protein sequence ID" value="CBP38209"/>
    <property type="gene ID" value="WBGene00032357"/>
    <property type="gene designation" value="Cbr-tra-2"/>
</dbReference>
<dbReference type="eggNOG" id="ENOG502R9RT">
    <property type="taxonomic scope" value="Eukaryota"/>
</dbReference>
<dbReference type="HOGENOM" id="CLU_005001_0_0_1"/>
<dbReference type="InParanoid" id="Q17307"/>
<dbReference type="OMA" id="SIWTIER"/>
<dbReference type="Proteomes" id="UP000008549">
    <property type="component" value="Unassembled WGS sequence"/>
</dbReference>
<dbReference type="GO" id="GO:0016020">
    <property type="term" value="C:membrane"/>
    <property type="evidence" value="ECO:0000314"/>
    <property type="project" value="UniProtKB"/>
</dbReference>
<dbReference type="GO" id="GO:0005886">
    <property type="term" value="C:plasma membrane"/>
    <property type="evidence" value="ECO:0000318"/>
    <property type="project" value="GO_Central"/>
</dbReference>
<dbReference type="GO" id="GO:0004888">
    <property type="term" value="F:transmembrane signaling receptor activity"/>
    <property type="evidence" value="ECO:0000318"/>
    <property type="project" value="GO_Central"/>
</dbReference>
<dbReference type="GO" id="GO:0030154">
    <property type="term" value="P:cell differentiation"/>
    <property type="evidence" value="ECO:0007669"/>
    <property type="project" value="UniProtKB-KW"/>
</dbReference>
<dbReference type="GO" id="GO:0018992">
    <property type="term" value="P:germ-line sex determination"/>
    <property type="evidence" value="ECO:0000315"/>
    <property type="project" value="UniProtKB"/>
</dbReference>
<dbReference type="GO" id="GO:0040021">
    <property type="term" value="P:hermaphrodite germ-line sex determination"/>
    <property type="evidence" value="ECO:0007669"/>
    <property type="project" value="InterPro"/>
</dbReference>
<dbReference type="GO" id="GO:0042001">
    <property type="term" value="P:hermaphrodite somatic sex determination"/>
    <property type="evidence" value="ECO:0007669"/>
    <property type="project" value="InterPro"/>
</dbReference>
<dbReference type="GO" id="GO:0007548">
    <property type="term" value="P:sex differentiation"/>
    <property type="evidence" value="ECO:0007669"/>
    <property type="project" value="UniProtKB-KW"/>
</dbReference>
<dbReference type="GO" id="GO:0007283">
    <property type="term" value="P:spermatogenesis"/>
    <property type="evidence" value="ECO:0007669"/>
    <property type="project" value="UniProtKB-KW"/>
</dbReference>
<dbReference type="InterPro" id="IPR032848">
    <property type="entry name" value="Ce-Tra-2"/>
</dbReference>
<dbReference type="PANTHER" id="PTHR39365">
    <property type="entry name" value="MX REGION OF TRA-2 RELATED-RELATED"/>
    <property type="match status" value="1"/>
</dbReference>
<dbReference type="PANTHER" id="PTHR39365:SF2">
    <property type="entry name" value="MX REGION OF TRA-2 RELATED-RELATED"/>
    <property type="match status" value="1"/>
</dbReference>
<accession>Q17307</accession>
<accession>A8XCP0</accession>
<accession>Q8ST82</accession>
<accession>Q8STA3</accession>
<name>TRA2_CAEBR</name>
<feature type="signal peptide" evidence="3">
    <location>
        <begin position="1"/>
        <end position="33"/>
    </location>
</feature>
<feature type="chain" id="PRO_0000022573" description="Sex-determining transformer protein 2">
    <location>
        <begin position="34"/>
        <end position="1489"/>
    </location>
</feature>
<feature type="transmembrane region" description="Helical" evidence="3">
    <location>
        <begin position="454"/>
        <end position="474"/>
    </location>
</feature>
<feature type="transmembrane region" description="Helical" evidence="3">
    <location>
        <begin position="489"/>
        <end position="509"/>
    </location>
</feature>
<feature type="transmembrane region" description="Helical" evidence="3">
    <location>
        <begin position="513"/>
        <end position="533"/>
    </location>
</feature>
<feature type="transmembrane region" description="Helical" evidence="3">
    <location>
        <begin position="600"/>
        <end position="620"/>
    </location>
</feature>
<feature type="transmembrane region" description="Helical" evidence="3">
    <location>
        <begin position="622"/>
        <end position="642"/>
    </location>
</feature>
<feature type="transmembrane region" description="Helical" evidence="3">
    <location>
        <begin position="749"/>
        <end position="769"/>
    </location>
</feature>
<feature type="transmembrane region" description="Helical" evidence="3">
    <location>
        <begin position="931"/>
        <end position="951"/>
    </location>
</feature>
<feature type="transmembrane region" description="Helical" evidence="3">
    <location>
        <begin position="958"/>
        <end position="978"/>
    </location>
</feature>
<feature type="transmembrane region" description="Helical" evidence="3">
    <location>
        <begin position="986"/>
        <end position="1006"/>
    </location>
</feature>
<feature type="transmembrane region" description="Helical" evidence="3">
    <location>
        <begin position="1041"/>
        <end position="1061"/>
    </location>
</feature>
<feature type="transmembrane region" description="Helical" evidence="3">
    <location>
        <begin position="1066"/>
        <end position="1086"/>
    </location>
</feature>
<feature type="region of interest" description="Interaction with fem-3" evidence="1">
    <location>
        <begin position="1138"/>
        <end position="1288"/>
    </location>
</feature>
<feature type="region of interest" description="Disordered" evidence="4">
    <location>
        <begin position="1143"/>
        <end position="1176"/>
    </location>
</feature>
<feature type="region of interest" description="Disordered" evidence="4">
    <location>
        <begin position="1233"/>
        <end position="1393"/>
    </location>
</feature>
<feature type="region of interest" description="MX regulatory domain; required for tra-1 binding">
    <location>
        <begin position="1402"/>
        <end position="1423"/>
    </location>
</feature>
<feature type="region of interest" description="Disordered" evidence="4">
    <location>
        <begin position="1412"/>
        <end position="1489"/>
    </location>
</feature>
<feature type="compositionally biased region" description="Basic and acidic residues" evidence="4">
    <location>
        <begin position="1275"/>
        <end position="1298"/>
    </location>
</feature>
<feature type="compositionally biased region" description="Basic and acidic residues" evidence="4">
    <location>
        <begin position="1326"/>
        <end position="1340"/>
    </location>
</feature>
<feature type="compositionally biased region" description="Basic and acidic residues" evidence="4">
    <location>
        <begin position="1423"/>
        <end position="1433"/>
    </location>
</feature>
<feature type="compositionally biased region" description="Pro residues" evidence="4">
    <location>
        <begin position="1444"/>
        <end position="1456"/>
    </location>
</feature>
<feature type="compositionally biased region" description="Basic and acidic residues" evidence="4">
    <location>
        <begin position="1460"/>
        <end position="1482"/>
    </location>
</feature>
<feature type="sequence variant" description="In strain: HK104, HK105, PB800 and PB826." evidence="6">
    <original>T</original>
    <variation>N</variation>
    <location>
        <position position="30"/>
    </location>
</feature>
<feature type="sequence variant" description="In strain: HK104, HK105, PB800 and PB826." evidence="6">
    <original>I</original>
    <variation>S</variation>
    <location>
        <position position="40"/>
    </location>
</feature>
<feature type="sequence variant" description="In strain: HK104, HK105, PB800 and PB826." evidence="6">
    <original>Q</original>
    <variation>E</variation>
    <location>
        <position position="57"/>
    </location>
</feature>
<feature type="sequence variant" description="In strain: HK104, HK105, PB800 and PB826." evidence="6">
    <original>A</original>
    <variation>T</variation>
    <location>
        <position position="120"/>
    </location>
</feature>
<feature type="sequence conflict" description="In Ref. 1; AAB49333." evidence="11" ref="1">
    <original>T</original>
    <variation>M</variation>
    <location>
        <position position="55"/>
    </location>
</feature>
<feature type="sequence conflict" description="In Ref. 1; AAB49333." evidence="11" ref="1">
    <original>GRRVLI</original>
    <variation>WKKSFDRYERRIYQ</variation>
    <location>
        <begin position="825"/>
        <end position="830"/>
    </location>
</feature>